<organism>
    <name type="scientific">Methanococcus maripaludis (strain DSM 14266 / JCM 13030 / NBRC 101832 / S2 / LL)</name>
    <dbReference type="NCBI Taxonomy" id="267377"/>
    <lineage>
        <taxon>Archaea</taxon>
        <taxon>Methanobacteriati</taxon>
        <taxon>Methanobacteriota</taxon>
        <taxon>Methanomada group</taxon>
        <taxon>Methanococci</taxon>
        <taxon>Methanococcales</taxon>
        <taxon>Methanococcaceae</taxon>
        <taxon>Methanococcus</taxon>
    </lineage>
</organism>
<dbReference type="EC" id="6.3.4.23" evidence="2"/>
<dbReference type="EMBL" id="BX950229">
    <property type="protein sequence ID" value="CAF30929.1"/>
    <property type="molecule type" value="Genomic_DNA"/>
</dbReference>
<dbReference type="RefSeq" id="WP_011171317.1">
    <property type="nucleotide sequence ID" value="NC_005791.1"/>
</dbReference>
<dbReference type="SMR" id="Q6LXH8"/>
<dbReference type="STRING" id="267377.MMP1373"/>
<dbReference type="EnsemblBacteria" id="CAF30929">
    <property type="protein sequence ID" value="CAF30929"/>
    <property type="gene ID" value="MMP1373"/>
</dbReference>
<dbReference type="GeneID" id="2762237"/>
<dbReference type="KEGG" id="mmp:MMP1373"/>
<dbReference type="PATRIC" id="fig|267377.15.peg.1408"/>
<dbReference type="eggNOG" id="arCOG04346">
    <property type="taxonomic scope" value="Archaea"/>
</dbReference>
<dbReference type="HOGENOM" id="CLU_065084_0_0_2"/>
<dbReference type="OrthoDB" id="98133at2157"/>
<dbReference type="UniPathway" id="UPA00074">
    <property type="reaction ID" value="UER00134"/>
</dbReference>
<dbReference type="Proteomes" id="UP000000590">
    <property type="component" value="Chromosome"/>
</dbReference>
<dbReference type="GO" id="GO:0005524">
    <property type="term" value="F:ATP binding"/>
    <property type="evidence" value="ECO:0007669"/>
    <property type="project" value="UniProtKB-KW"/>
</dbReference>
<dbReference type="GO" id="GO:0016879">
    <property type="term" value="F:ligase activity, forming carbon-nitrogen bonds"/>
    <property type="evidence" value="ECO:0007669"/>
    <property type="project" value="UniProtKB-UniRule"/>
</dbReference>
<dbReference type="GO" id="GO:0000287">
    <property type="term" value="F:magnesium ion binding"/>
    <property type="evidence" value="ECO:0007669"/>
    <property type="project" value="InterPro"/>
</dbReference>
<dbReference type="GO" id="GO:0006189">
    <property type="term" value="P:'de novo' IMP biosynthetic process"/>
    <property type="evidence" value="ECO:0007669"/>
    <property type="project" value="UniProtKB-UniRule"/>
</dbReference>
<dbReference type="Gene3D" id="3.40.50.20">
    <property type="match status" value="1"/>
</dbReference>
<dbReference type="Gene3D" id="3.30.1490.20">
    <property type="entry name" value="ATP-grasp fold, A domain"/>
    <property type="match status" value="1"/>
</dbReference>
<dbReference type="Gene3D" id="3.30.470.20">
    <property type="entry name" value="ATP-grasp fold, B domain"/>
    <property type="match status" value="1"/>
</dbReference>
<dbReference type="HAMAP" id="MF_01163">
    <property type="entry name" value="IMP_biosynth_PurP"/>
    <property type="match status" value="1"/>
</dbReference>
<dbReference type="InterPro" id="IPR011761">
    <property type="entry name" value="ATP-grasp"/>
</dbReference>
<dbReference type="InterPro" id="IPR013815">
    <property type="entry name" value="ATP_grasp_subdomain_1"/>
</dbReference>
<dbReference type="InterPro" id="IPR023656">
    <property type="entry name" value="IMP_biosynth_PurP"/>
</dbReference>
<dbReference type="InterPro" id="IPR009720">
    <property type="entry name" value="IMP_biosynth_PurP_C"/>
</dbReference>
<dbReference type="InterPro" id="IPR010672">
    <property type="entry name" value="IMP_biosynth_PurP_N"/>
</dbReference>
<dbReference type="InterPro" id="IPR016185">
    <property type="entry name" value="PreATP-grasp_dom_sf"/>
</dbReference>
<dbReference type="NCBIfam" id="NF009780">
    <property type="entry name" value="PRK13278.1-5"/>
    <property type="match status" value="1"/>
</dbReference>
<dbReference type="PANTHER" id="PTHR38147:SF2">
    <property type="entry name" value="5-FORMAMINOIMIDAZOLE-4-CARBOXAMIDE-1-(BETA)-D-RIBOFURANOSYL 5'-MONOPHOSPHATE SYNTHETASE"/>
    <property type="match status" value="1"/>
</dbReference>
<dbReference type="PANTHER" id="PTHR38147">
    <property type="entry name" value="5-FORMAMINOIMIDAZOLE-4-CARBOXAMIDE-1-(BETA)-D-RIBOFURANOSYL 5'-MONOPHOSPHATE SYNTHETASE-RELATED"/>
    <property type="match status" value="1"/>
</dbReference>
<dbReference type="Pfam" id="PF06849">
    <property type="entry name" value="DUF1246"/>
    <property type="match status" value="1"/>
</dbReference>
<dbReference type="Pfam" id="PF06973">
    <property type="entry name" value="DUF1297"/>
    <property type="match status" value="1"/>
</dbReference>
<dbReference type="PIRSF" id="PIRSF004602">
    <property type="entry name" value="ATPgrasp_PurP"/>
    <property type="match status" value="1"/>
</dbReference>
<dbReference type="SUPFAM" id="SSF56059">
    <property type="entry name" value="Glutathione synthetase ATP-binding domain-like"/>
    <property type="match status" value="1"/>
</dbReference>
<dbReference type="SUPFAM" id="SSF52440">
    <property type="entry name" value="PreATP-grasp domain"/>
    <property type="match status" value="1"/>
</dbReference>
<dbReference type="PROSITE" id="PS50975">
    <property type="entry name" value="ATP_GRASP"/>
    <property type="match status" value="1"/>
</dbReference>
<gene>
    <name evidence="2" type="primary">purP</name>
    <name type="ordered locus">MMP1373</name>
</gene>
<accession>Q6LXH8</accession>
<protein>
    <recommendedName>
        <fullName evidence="2">5-formaminoimidazole-4-carboxamide-1-(beta)-D-ribofuranosyl 5'-monophosphate synthetase</fullName>
        <ecNumber evidence="2">6.3.4.23</ecNumber>
    </recommendedName>
    <alternativeName>
        <fullName evidence="2">5-aminoimidazole-4-carboxamide-1-beta-D-ribofuranosyl 5'-monophosphate--formate ligase</fullName>
    </alternativeName>
</protein>
<sequence length="361" mass="40413">MIPKEEIMGIFEKYNKDEVTIVTVGSHTSLHILKGAKLEGFSTAVITTKDRAIPYKRFGVADKFIYVDQFSDISKEEIQQQLRDMNAIIVPHGSFIAYCGLDNVEDTFKVPMFGNRAILRWEAERDLEGQLLGGSGLRIPKKYGGPDEIDGPVMVKFPGARGGRGYFPCSSVEEFWRKIDEFKAKGVLTEDDVSKAHIEEYVVGANYCIHYFYSPLKDQVELMGIDRRYESSIDGLVRVPAKDQLELDIDPSYVITGNFPVVIRESLLPQVFDMGDKLVAKAKEEVNPGMLGPFCLQSLCNENLELVVFEMSARVDGGTNTFMNGSPYSCLYTGEPLSMGQRIAKEIKLALELDMIDKVIS</sequence>
<comment type="function">
    <text evidence="2">Catalyzes the ATP- and formate-dependent formylation of 5-aminoimidazole-4-carboxamide-1-beta-d-ribofuranosyl 5'-monophosphate (AICAR) to 5-formaminoimidazole-4-carboxamide-1-beta-d-ribofuranosyl 5'-monophosphate (FAICAR) in the absence of folates.</text>
</comment>
<comment type="catalytic activity">
    <reaction evidence="2">
        <text>5-amino-1-(5-phospho-beta-D-ribosyl)imidazole-4-carboxamide + formate + ATP = 5-formamido-1-(5-phospho-D-ribosyl)imidazole-4-carboxamide + ADP + phosphate</text>
        <dbReference type="Rhea" id="RHEA:24836"/>
        <dbReference type="ChEBI" id="CHEBI:15740"/>
        <dbReference type="ChEBI" id="CHEBI:30616"/>
        <dbReference type="ChEBI" id="CHEBI:43474"/>
        <dbReference type="ChEBI" id="CHEBI:58467"/>
        <dbReference type="ChEBI" id="CHEBI:58475"/>
        <dbReference type="ChEBI" id="CHEBI:456216"/>
        <dbReference type="EC" id="6.3.4.23"/>
    </reaction>
</comment>
<comment type="cofactor">
    <cofactor evidence="1">
        <name>Mg(2+)</name>
        <dbReference type="ChEBI" id="CHEBI:18420"/>
    </cofactor>
    <cofactor evidence="1">
        <name>Mn(2+)</name>
        <dbReference type="ChEBI" id="CHEBI:29035"/>
    </cofactor>
    <text evidence="1">Binds 1 Mg(2+) or Mn(2+) ion per subunit.</text>
</comment>
<comment type="pathway">
    <text evidence="2">Purine metabolism; IMP biosynthesis via de novo pathway; 5-formamido-1-(5-phospho-D-ribosyl)imidazole-4-carboxamide from 5-amino-1-(5-phospho-D-ribosyl)imidazole-4-carboxamide (formate route): step 1/1.</text>
</comment>
<comment type="similarity">
    <text evidence="2">Belongs to the phosphohexose mutase family.</text>
</comment>
<proteinExistence type="inferred from homology"/>
<name>PURP_METMP</name>
<feature type="chain" id="PRO_0000148026" description="5-formaminoimidazole-4-carboxamide-1-(beta)-D-ribofuranosyl 5'-monophosphate synthetase">
    <location>
        <begin position="1"/>
        <end position="361"/>
    </location>
</feature>
<feature type="domain" description="ATP-grasp" evidence="2">
    <location>
        <begin position="116"/>
        <end position="348"/>
    </location>
</feature>
<feature type="binding site" evidence="2">
    <location>
        <position position="27"/>
    </location>
    <ligand>
        <name>5-amino-1-(5-phospho-beta-D-ribosyl)imidazole-4-carboxamide</name>
        <dbReference type="ChEBI" id="CHEBI:58475"/>
    </ligand>
</feature>
<feature type="binding site" evidence="2">
    <location>
        <position position="94"/>
    </location>
    <ligand>
        <name>5-amino-1-(5-phospho-beta-D-ribosyl)imidazole-4-carboxamide</name>
        <dbReference type="ChEBI" id="CHEBI:58475"/>
    </ligand>
</feature>
<feature type="binding site" evidence="2">
    <location>
        <begin position="146"/>
        <end position="208"/>
    </location>
    <ligand>
        <name>ATP</name>
        <dbReference type="ChEBI" id="CHEBI:30616"/>
    </ligand>
</feature>
<feature type="binding site" evidence="2">
    <location>
        <position position="230"/>
    </location>
    <ligand>
        <name>ATP</name>
        <dbReference type="ChEBI" id="CHEBI:30616"/>
    </ligand>
</feature>
<feature type="binding site" evidence="2">
    <location>
        <position position="258"/>
    </location>
    <ligand>
        <name>5-amino-1-(5-phospho-beta-D-ribosyl)imidazole-4-carboxamide</name>
        <dbReference type="ChEBI" id="CHEBI:58475"/>
    </ligand>
</feature>
<feature type="binding site" evidence="2">
    <location>
        <position position="297"/>
    </location>
    <ligand>
        <name>Mg(2+)</name>
        <dbReference type="ChEBI" id="CHEBI:18420"/>
    </ligand>
</feature>
<feature type="binding site" evidence="2">
    <location>
        <position position="310"/>
    </location>
    <ligand>
        <name>Mg(2+)</name>
        <dbReference type="ChEBI" id="CHEBI:18420"/>
    </ligand>
</feature>
<keyword id="KW-0067">ATP-binding</keyword>
<keyword id="KW-0436">Ligase</keyword>
<keyword id="KW-0460">Magnesium</keyword>
<keyword id="KW-0464">Manganese</keyword>
<keyword id="KW-0479">Metal-binding</keyword>
<keyword id="KW-0547">Nucleotide-binding</keyword>
<keyword id="KW-0658">Purine biosynthesis</keyword>
<keyword id="KW-1185">Reference proteome</keyword>
<evidence type="ECO:0000250" key="1"/>
<evidence type="ECO:0000255" key="2">
    <source>
        <dbReference type="HAMAP-Rule" id="MF_01163"/>
    </source>
</evidence>
<reference key="1">
    <citation type="journal article" date="2004" name="J. Bacteriol.">
        <title>Complete genome sequence of the genetically tractable hydrogenotrophic methanogen Methanococcus maripaludis.</title>
        <authorList>
            <person name="Hendrickson E.L."/>
            <person name="Kaul R."/>
            <person name="Zhou Y."/>
            <person name="Bovee D."/>
            <person name="Chapman P."/>
            <person name="Chung J."/>
            <person name="Conway de Macario E."/>
            <person name="Dodsworth J.A."/>
            <person name="Gillett W."/>
            <person name="Graham D.E."/>
            <person name="Hackett M."/>
            <person name="Haydock A.K."/>
            <person name="Kang A."/>
            <person name="Land M.L."/>
            <person name="Levy R."/>
            <person name="Lie T.J."/>
            <person name="Major T.A."/>
            <person name="Moore B.C."/>
            <person name="Porat I."/>
            <person name="Palmeiri A."/>
            <person name="Rouse G."/>
            <person name="Saenphimmachak C."/>
            <person name="Soell D."/>
            <person name="Van Dien S."/>
            <person name="Wang T."/>
            <person name="Whitman W.B."/>
            <person name="Xia Q."/>
            <person name="Zhang Y."/>
            <person name="Larimer F.W."/>
            <person name="Olson M.V."/>
            <person name="Leigh J.A."/>
        </authorList>
    </citation>
    <scope>NUCLEOTIDE SEQUENCE [LARGE SCALE GENOMIC DNA]</scope>
    <source>
        <strain>DSM 14266 / JCM 13030 / NBRC 101832 / S2 / LL</strain>
    </source>
</reference>